<keyword id="KW-0028">Amino-acid biosynthesis</keyword>
<keyword id="KW-0057">Aromatic amino acid biosynthesis</keyword>
<keyword id="KW-0170">Cobalt</keyword>
<keyword id="KW-0963">Cytoplasm</keyword>
<keyword id="KW-0456">Lyase</keyword>
<keyword id="KW-0479">Metal-binding</keyword>
<keyword id="KW-0520">NAD</keyword>
<keyword id="KW-0547">Nucleotide-binding</keyword>
<keyword id="KW-0862">Zinc</keyword>
<gene>
    <name evidence="1" type="primary">aroB</name>
    <name type="ordered locus">cbdbA431</name>
</gene>
<protein>
    <recommendedName>
        <fullName evidence="1">3-dehydroquinate synthase</fullName>
        <shortName evidence="1">DHQS</shortName>
        <ecNumber evidence="1">4.2.3.4</ecNumber>
    </recommendedName>
</protein>
<evidence type="ECO:0000255" key="1">
    <source>
        <dbReference type="HAMAP-Rule" id="MF_00110"/>
    </source>
</evidence>
<proteinExistence type="inferred from homology"/>
<dbReference type="EC" id="4.2.3.4" evidence="1"/>
<dbReference type="EMBL" id="AJ965256">
    <property type="protein sequence ID" value="CAI82632.1"/>
    <property type="molecule type" value="Genomic_DNA"/>
</dbReference>
<dbReference type="RefSeq" id="WP_011308989.1">
    <property type="nucleotide sequence ID" value="NC_007356.1"/>
</dbReference>
<dbReference type="SMR" id="Q3ZZN1"/>
<dbReference type="KEGG" id="deh:cbdbA431"/>
<dbReference type="HOGENOM" id="CLU_001201_0_2_0"/>
<dbReference type="UniPathway" id="UPA00053">
    <property type="reaction ID" value="UER00085"/>
</dbReference>
<dbReference type="Proteomes" id="UP000000433">
    <property type="component" value="Chromosome"/>
</dbReference>
<dbReference type="GO" id="GO:0005737">
    <property type="term" value="C:cytoplasm"/>
    <property type="evidence" value="ECO:0007669"/>
    <property type="project" value="UniProtKB-SubCell"/>
</dbReference>
<dbReference type="GO" id="GO:0003856">
    <property type="term" value="F:3-dehydroquinate synthase activity"/>
    <property type="evidence" value="ECO:0007669"/>
    <property type="project" value="UniProtKB-UniRule"/>
</dbReference>
<dbReference type="GO" id="GO:0046872">
    <property type="term" value="F:metal ion binding"/>
    <property type="evidence" value="ECO:0007669"/>
    <property type="project" value="UniProtKB-KW"/>
</dbReference>
<dbReference type="GO" id="GO:0000166">
    <property type="term" value="F:nucleotide binding"/>
    <property type="evidence" value="ECO:0007669"/>
    <property type="project" value="UniProtKB-KW"/>
</dbReference>
<dbReference type="GO" id="GO:0008652">
    <property type="term" value="P:amino acid biosynthetic process"/>
    <property type="evidence" value="ECO:0007669"/>
    <property type="project" value="UniProtKB-KW"/>
</dbReference>
<dbReference type="GO" id="GO:0009073">
    <property type="term" value="P:aromatic amino acid family biosynthetic process"/>
    <property type="evidence" value="ECO:0007669"/>
    <property type="project" value="UniProtKB-KW"/>
</dbReference>
<dbReference type="GO" id="GO:0009423">
    <property type="term" value="P:chorismate biosynthetic process"/>
    <property type="evidence" value="ECO:0007669"/>
    <property type="project" value="UniProtKB-UniRule"/>
</dbReference>
<dbReference type="CDD" id="cd08195">
    <property type="entry name" value="DHQS"/>
    <property type="match status" value="1"/>
</dbReference>
<dbReference type="FunFam" id="3.40.50.1970:FF:000007">
    <property type="entry name" value="Pentafunctional AROM polypeptide"/>
    <property type="match status" value="1"/>
</dbReference>
<dbReference type="Gene3D" id="3.40.50.1970">
    <property type="match status" value="1"/>
</dbReference>
<dbReference type="Gene3D" id="1.20.1090.10">
    <property type="entry name" value="Dehydroquinate synthase-like - alpha domain"/>
    <property type="match status" value="1"/>
</dbReference>
<dbReference type="HAMAP" id="MF_00110">
    <property type="entry name" value="DHQ_synthase"/>
    <property type="match status" value="1"/>
</dbReference>
<dbReference type="InterPro" id="IPR050071">
    <property type="entry name" value="Dehydroquinate_synthase"/>
</dbReference>
<dbReference type="InterPro" id="IPR016037">
    <property type="entry name" value="DHQ_synth_AroB"/>
</dbReference>
<dbReference type="InterPro" id="IPR030963">
    <property type="entry name" value="DHQ_synth_fam"/>
</dbReference>
<dbReference type="InterPro" id="IPR030960">
    <property type="entry name" value="DHQS/DOIS_N"/>
</dbReference>
<dbReference type="InterPro" id="IPR056179">
    <property type="entry name" value="DHQS_C"/>
</dbReference>
<dbReference type="NCBIfam" id="TIGR01357">
    <property type="entry name" value="aroB"/>
    <property type="match status" value="1"/>
</dbReference>
<dbReference type="PANTHER" id="PTHR43622">
    <property type="entry name" value="3-DEHYDROQUINATE SYNTHASE"/>
    <property type="match status" value="1"/>
</dbReference>
<dbReference type="PANTHER" id="PTHR43622:SF7">
    <property type="entry name" value="3-DEHYDROQUINATE SYNTHASE, CHLOROPLASTIC"/>
    <property type="match status" value="1"/>
</dbReference>
<dbReference type="Pfam" id="PF01761">
    <property type="entry name" value="DHQ_synthase"/>
    <property type="match status" value="1"/>
</dbReference>
<dbReference type="Pfam" id="PF24621">
    <property type="entry name" value="DHQS_C"/>
    <property type="match status" value="1"/>
</dbReference>
<dbReference type="PIRSF" id="PIRSF001455">
    <property type="entry name" value="DHQ_synth"/>
    <property type="match status" value="1"/>
</dbReference>
<dbReference type="SUPFAM" id="SSF56796">
    <property type="entry name" value="Dehydroquinate synthase-like"/>
    <property type="match status" value="1"/>
</dbReference>
<organism>
    <name type="scientific">Dehalococcoides mccartyi (strain CBDB1)</name>
    <dbReference type="NCBI Taxonomy" id="255470"/>
    <lineage>
        <taxon>Bacteria</taxon>
        <taxon>Bacillati</taxon>
        <taxon>Chloroflexota</taxon>
        <taxon>Dehalococcoidia</taxon>
        <taxon>Dehalococcoidales</taxon>
        <taxon>Dehalococcoidaceae</taxon>
        <taxon>Dehalococcoides</taxon>
    </lineage>
</organism>
<comment type="function">
    <text evidence="1">Catalyzes the conversion of 3-deoxy-D-arabino-heptulosonate 7-phosphate (DAHP) to dehydroquinate (DHQ).</text>
</comment>
<comment type="catalytic activity">
    <reaction evidence="1">
        <text>7-phospho-2-dehydro-3-deoxy-D-arabino-heptonate = 3-dehydroquinate + phosphate</text>
        <dbReference type="Rhea" id="RHEA:21968"/>
        <dbReference type="ChEBI" id="CHEBI:32364"/>
        <dbReference type="ChEBI" id="CHEBI:43474"/>
        <dbReference type="ChEBI" id="CHEBI:58394"/>
        <dbReference type="EC" id="4.2.3.4"/>
    </reaction>
</comment>
<comment type="cofactor">
    <cofactor evidence="1">
        <name>Co(2+)</name>
        <dbReference type="ChEBI" id="CHEBI:48828"/>
    </cofactor>
    <cofactor evidence="1">
        <name>Zn(2+)</name>
        <dbReference type="ChEBI" id="CHEBI:29105"/>
    </cofactor>
    <text evidence="1">Binds 1 divalent metal cation per subunit. Can use either Co(2+) or Zn(2+).</text>
</comment>
<comment type="cofactor">
    <cofactor evidence="1">
        <name>NAD(+)</name>
        <dbReference type="ChEBI" id="CHEBI:57540"/>
    </cofactor>
</comment>
<comment type="pathway">
    <text evidence="1">Metabolic intermediate biosynthesis; chorismate biosynthesis; chorismate from D-erythrose 4-phosphate and phosphoenolpyruvate: step 2/7.</text>
</comment>
<comment type="subcellular location">
    <subcellularLocation>
        <location evidence="1">Cytoplasm</location>
    </subcellularLocation>
</comment>
<comment type="similarity">
    <text evidence="1">Belongs to the sugar phosphate cyclases superfamily. Dehydroquinate synthase family.</text>
</comment>
<sequence>MKSIGLNLSGREYKILIGSDLLSETATLLREAIPCDRVVVITNIDINRIYGKKLKKHLESKGIESLFLELPEGEIHKTLDMAAHIYPQLINHFAERNTPILALGGGVIGDLSGFVAATYQRGVPLIHLPTSLLSQVDSSIGGKVAVNHGGVKNIVGSFYQPRLVIADTGCLKTLPEKEFACGMAEIIKSAAIGSSELFRLLETNTQAVKDRSPEVMEDIVSQTAAIKASIVCQDETDRGIRNILNFGHTLGHALESTSSFSQSHGAAVAIGMCFAARLSVRLGLCENETALRLEKLIADFGLPTNPKDIDPDKIIEAMHHDKKVSDGRIRFILLKRPGEALIAENILKPDVLSVLEEMK</sequence>
<feature type="chain" id="PRO_0000231085" description="3-dehydroquinate synthase">
    <location>
        <begin position="1"/>
        <end position="359"/>
    </location>
</feature>
<feature type="binding site" evidence="1">
    <location>
        <begin position="72"/>
        <end position="77"/>
    </location>
    <ligand>
        <name>NAD(+)</name>
        <dbReference type="ChEBI" id="CHEBI:57540"/>
    </ligand>
</feature>
<feature type="binding site" evidence="1">
    <location>
        <begin position="106"/>
        <end position="110"/>
    </location>
    <ligand>
        <name>NAD(+)</name>
        <dbReference type="ChEBI" id="CHEBI:57540"/>
    </ligand>
</feature>
<feature type="binding site" evidence="1">
    <location>
        <begin position="130"/>
        <end position="131"/>
    </location>
    <ligand>
        <name>NAD(+)</name>
        <dbReference type="ChEBI" id="CHEBI:57540"/>
    </ligand>
</feature>
<feature type="binding site" evidence="1">
    <location>
        <position position="143"/>
    </location>
    <ligand>
        <name>NAD(+)</name>
        <dbReference type="ChEBI" id="CHEBI:57540"/>
    </ligand>
</feature>
<feature type="binding site" evidence="1">
    <location>
        <position position="152"/>
    </location>
    <ligand>
        <name>NAD(+)</name>
        <dbReference type="ChEBI" id="CHEBI:57540"/>
    </ligand>
</feature>
<feature type="binding site" evidence="1">
    <location>
        <begin position="170"/>
        <end position="173"/>
    </location>
    <ligand>
        <name>NAD(+)</name>
        <dbReference type="ChEBI" id="CHEBI:57540"/>
    </ligand>
</feature>
<feature type="binding site" evidence="1">
    <location>
        <position position="185"/>
    </location>
    <ligand>
        <name>Zn(2+)</name>
        <dbReference type="ChEBI" id="CHEBI:29105"/>
    </ligand>
</feature>
<feature type="binding site" evidence="1">
    <location>
        <position position="248"/>
    </location>
    <ligand>
        <name>Zn(2+)</name>
        <dbReference type="ChEBI" id="CHEBI:29105"/>
    </ligand>
</feature>
<feature type="binding site" evidence="1">
    <location>
        <position position="264"/>
    </location>
    <ligand>
        <name>Zn(2+)</name>
        <dbReference type="ChEBI" id="CHEBI:29105"/>
    </ligand>
</feature>
<reference key="1">
    <citation type="journal article" date="2005" name="Nat. Biotechnol.">
        <title>Genome sequence of the chlorinated compound-respiring bacterium Dehalococcoides species strain CBDB1.</title>
        <authorList>
            <person name="Kube M."/>
            <person name="Beck A."/>
            <person name="Zinder S.H."/>
            <person name="Kuhl H."/>
            <person name="Reinhardt R."/>
            <person name="Adrian L."/>
        </authorList>
    </citation>
    <scope>NUCLEOTIDE SEQUENCE [LARGE SCALE GENOMIC DNA]</scope>
    <source>
        <strain>CBDB1</strain>
    </source>
</reference>
<accession>Q3ZZN1</accession>
<name>AROB_DEHMC</name>